<reference evidence="6 7" key="1">
    <citation type="journal article" date="2000" name="Nature">
        <title>The genome sequence of the food-borne pathogen Campylobacter jejuni reveals hypervariable sequences.</title>
        <authorList>
            <person name="Parkhill J."/>
            <person name="Wren B.W."/>
            <person name="Mungall K.L."/>
            <person name="Ketley J.M."/>
            <person name="Churcher C.M."/>
            <person name="Basham D."/>
            <person name="Chillingworth T."/>
            <person name="Davies R.M."/>
            <person name="Feltwell T."/>
            <person name="Holroyd S."/>
            <person name="Jagels K."/>
            <person name="Karlyshev A.V."/>
            <person name="Moule S."/>
            <person name="Pallen M.J."/>
            <person name="Penn C.W."/>
            <person name="Quail M.A."/>
            <person name="Rajandream M.A."/>
            <person name="Rutherford K.M."/>
            <person name="van Vliet A.H.M."/>
            <person name="Whitehead S."/>
            <person name="Barrell B.G."/>
        </authorList>
    </citation>
    <scope>NUCLEOTIDE SEQUENCE [LARGE SCALE GENOMIC DNA]</scope>
    <source>
        <strain evidence="7">ATCC 700819 / NCTC 11168</strain>
    </source>
</reference>
<reference key="2">
    <citation type="journal article" date="2021" name="Biochemistry">
        <title>Functional Characterization of Two PLP-Dependent Enzymes Involved in Capsular Polysaccharide Biosynthesis from Campylobacter jejuni.</title>
        <authorList>
            <person name="Riegert A.S."/>
            <person name="Narindoshvili T."/>
            <person name="Coricello A."/>
            <person name="Richards N.G.J."/>
            <person name="Raushel F.M."/>
        </authorList>
    </citation>
    <scope>FUNCTION</scope>
    <scope>CATALYTIC ACTIVITY</scope>
    <scope>SUBSTRATE SPECIFICITY</scope>
    <scope>COFACTOR</scope>
    <scope>BIOPHYSICOCHEMICAL PROPERTIES</scope>
    <scope>PATHWAY</scope>
    <scope>BIOTECHNOLOGY</scope>
    <source>
        <strain evidence="4">ATCC 700819 / NCTC 11168</strain>
    </source>
</reference>
<sequence length="367" mass="41929">MQANKNIQKLTPYLSIPHKIWNSSQSNILKLDWNEATIPPSPYVIESIKKFLVNGNLNWYPNTKNLYLLDKIAEYTKQINSSFVELFEGSDSAHECIIDVFLDKCDKIGIVSPTYDNFRSRANGVGIETISFTLDDNFNLDFDSLEYFIHEKRIKLLYLCNPNNPTGKSYNIQKIKSLIINNPNVMFIIDEAYYEFTSQSVCDLVEQCNNLIITRTFSKAFALASFRIGYIISHPENIESINKLRNPKSVPMLSQIAANAALEDLQYMRDYVDEVSCARMEFVKFLNTLTTGGGGIFNDSVANFVLIQNENISLFVGFLEKEGIFIRNYSHLISKNCRISIGTRNQMSYVAEKIQEFAKKQGGFHLV</sequence>
<comment type="function">
    <text evidence="3">Pyridoxal phosphate (PLP)-dependent transaminase involved in the biosynthesis of amidated D-glucuronic acid structures found on the capsular polysaccharide (CPS) of C.jejuni. Catalyzes the transamination of dihydroxyacetone phosphate (DHAP) to (S)-serinol phosphate in the presence of L-glutamate. Less active with L-aspartate. No activity with dihydroxyacetone or L-alanine.</text>
</comment>
<comment type="catalytic activity">
    <reaction evidence="3">
        <text>dihydroxyacetone phosphate + L-glutamate = (S)-serinol phosphate + 2-oxoglutarate</text>
        <dbReference type="Rhea" id="RHEA:69552"/>
        <dbReference type="ChEBI" id="CHEBI:16810"/>
        <dbReference type="ChEBI" id="CHEBI:29985"/>
        <dbReference type="ChEBI" id="CHEBI:57642"/>
        <dbReference type="ChEBI" id="CHEBI:184377"/>
    </reaction>
</comment>
<comment type="cofactor">
    <cofactor evidence="2 3">
        <name>pyridoxal 5'-phosphate</name>
        <dbReference type="ChEBI" id="CHEBI:597326"/>
    </cofactor>
</comment>
<comment type="biophysicochemical properties">
    <kinetics>
        <KM evidence="3">42 uM for dihydroxyacetone phosphate (DHAP) (at pH 8.0 and 25 degrees Celsius)</KM>
        <text evidence="3">kcat is 0.50 sec(-1) with DHAP as substrate.</text>
    </kinetics>
</comment>
<comment type="pathway">
    <text evidence="5">Capsule biogenesis; capsule polysaccharide biosynthesis.</text>
</comment>
<comment type="biotechnology">
    <text evidence="5">The reaction product of this enzyme, serinol phosphate, is an important precursor for serinol (2-amino-1,3-propanediol) production. Serinol, in turn, is an intermediate in the formation of certain drugs, such as the anti-cancer N-palmitoyl-2-amino-1,3-propanediol, and the orally administered fingolimod (sold under the brand name Gilenya) to treat multiple sclerosis.</text>
</comment>
<comment type="similarity">
    <text evidence="2">Belongs to the class-II pyridoxal-phosphate-dependent aminotransferase family.</text>
</comment>
<organism evidence="7">
    <name type="scientific">Campylobacter jejuni subsp. jejuni serotype O:2 (strain ATCC 700819 / NCTC 11168)</name>
    <dbReference type="NCBI Taxonomy" id="192222"/>
    <lineage>
        <taxon>Bacteria</taxon>
        <taxon>Pseudomonadati</taxon>
        <taxon>Campylobacterota</taxon>
        <taxon>Epsilonproteobacteria</taxon>
        <taxon>Campylobacterales</taxon>
        <taxon>Campylobacteraceae</taxon>
        <taxon>Campylobacter</taxon>
    </lineage>
</organism>
<feature type="chain" id="PRO_0000455117" description="Dihydroxyacetone phosphate transaminase Cj1437c">
    <location>
        <begin position="1"/>
        <end position="367"/>
    </location>
</feature>
<feature type="modified residue" description="N6-(pyridoxal phosphate)lysine" evidence="1">
    <location>
        <position position="219"/>
    </location>
</feature>
<proteinExistence type="evidence at protein level"/>
<gene>
    <name evidence="6" type="ordered locus">Cj1437c</name>
</gene>
<protein>
    <recommendedName>
        <fullName evidence="5">Dihydroxyacetone phosphate transaminase Cj1437c</fullName>
        <ecNumber evidence="3">2.6.1.-</ecNumber>
    </recommendedName>
    <alternativeName>
        <fullName evidence="5">Capsule polysaccharide biosynthesis protein Cj1437c</fullName>
    </alternativeName>
    <alternativeName>
        <fullName evidence="4">PLP-dependent transaminase Cj1437</fullName>
    </alternativeName>
</protein>
<accession>Q0P8H7</accession>
<evidence type="ECO:0000250" key="1">
    <source>
        <dbReference type="UniProtKB" id="Q9X0D0"/>
    </source>
</evidence>
<evidence type="ECO:0000255" key="2">
    <source>
        <dbReference type="RuleBase" id="RU003693"/>
    </source>
</evidence>
<evidence type="ECO:0000269" key="3">
    <source>
    </source>
</evidence>
<evidence type="ECO:0000303" key="4">
    <source>
    </source>
</evidence>
<evidence type="ECO:0000305" key="5">
    <source>
    </source>
</evidence>
<evidence type="ECO:0000312" key="6">
    <source>
        <dbReference type="EMBL" id="CAL35546.1"/>
    </source>
</evidence>
<evidence type="ECO:0000312" key="7">
    <source>
        <dbReference type="Proteomes" id="UP000000799"/>
    </source>
</evidence>
<dbReference type="EC" id="2.6.1.-" evidence="3"/>
<dbReference type="EMBL" id="AL111168">
    <property type="protein sequence ID" value="CAL35546.1"/>
    <property type="molecule type" value="Genomic_DNA"/>
</dbReference>
<dbReference type="PIR" id="E81289">
    <property type="entry name" value="E81289"/>
</dbReference>
<dbReference type="RefSeq" id="WP_002858082.1">
    <property type="nucleotide sequence ID" value="NZ_SZUC01000003.1"/>
</dbReference>
<dbReference type="RefSeq" id="YP_002344820.1">
    <property type="nucleotide sequence ID" value="NC_002163.1"/>
</dbReference>
<dbReference type="SMR" id="Q0P8H7"/>
<dbReference type="STRING" id="192222.Cj1437c"/>
<dbReference type="PaxDb" id="192222-Cj1437c"/>
<dbReference type="DNASU" id="905726"/>
<dbReference type="EnsemblBacteria" id="CAL35546">
    <property type="protein sequence ID" value="CAL35546"/>
    <property type="gene ID" value="Cj1437c"/>
</dbReference>
<dbReference type="GeneID" id="905726"/>
<dbReference type="KEGG" id="cje:Cj1437c"/>
<dbReference type="PATRIC" id="fig|192222.6.peg.1418"/>
<dbReference type="eggNOG" id="COG0079">
    <property type="taxonomic scope" value="Bacteria"/>
</dbReference>
<dbReference type="HOGENOM" id="CLU_017584_3_0_7"/>
<dbReference type="OrthoDB" id="9813612at2"/>
<dbReference type="STRENDA-DB" id="IHCOUB">
    <property type="experiment" value="Determination of Kinetic Constants for Cj1437"/>
</dbReference>
<dbReference type="UniPathway" id="UPA00934"/>
<dbReference type="Proteomes" id="UP000000799">
    <property type="component" value="Chromosome"/>
</dbReference>
<dbReference type="GO" id="GO:0030170">
    <property type="term" value="F:pyridoxal phosphate binding"/>
    <property type="evidence" value="ECO:0000314"/>
    <property type="project" value="UniProtKB"/>
</dbReference>
<dbReference type="GO" id="GO:0008483">
    <property type="term" value="F:transaminase activity"/>
    <property type="evidence" value="ECO:0000314"/>
    <property type="project" value="UniProtKB"/>
</dbReference>
<dbReference type="GO" id="GO:0045227">
    <property type="term" value="P:capsule polysaccharide biosynthetic process"/>
    <property type="evidence" value="ECO:0000314"/>
    <property type="project" value="UniProtKB"/>
</dbReference>
<dbReference type="GO" id="GO:0009226">
    <property type="term" value="P:nucleotide-sugar biosynthetic process"/>
    <property type="evidence" value="ECO:0000314"/>
    <property type="project" value="UniProtKB"/>
</dbReference>
<dbReference type="CDD" id="cd00609">
    <property type="entry name" value="AAT_like"/>
    <property type="match status" value="1"/>
</dbReference>
<dbReference type="Gene3D" id="3.90.1150.10">
    <property type="entry name" value="Aspartate Aminotransferase, domain 1"/>
    <property type="match status" value="1"/>
</dbReference>
<dbReference type="Gene3D" id="3.40.640.10">
    <property type="entry name" value="Type I PLP-dependent aspartate aminotransferase-like (Major domain)"/>
    <property type="match status" value="1"/>
</dbReference>
<dbReference type="InterPro" id="IPR001917">
    <property type="entry name" value="Aminotrans_II_pyridoxalP_BS"/>
</dbReference>
<dbReference type="InterPro" id="IPR004839">
    <property type="entry name" value="Aminotransferase_I/II_large"/>
</dbReference>
<dbReference type="InterPro" id="IPR015424">
    <property type="entry name" value="PyrdxlP-dep_Trfase"/>
</dbReference>
<dbReference type="InterPro" id="IPR015421">
    <property type="entry name" value="PyrdxlP-dep_Trfase_major"/>
</dbReference>
<dbReference type="InterPro" id="IPR015422">
    <property type="entry name" value="PyrdxlP-dep_Trfase_small"/>
</dbReference>
<dbReference type="PANTHER" id="PTHR42885:SF2">
    <property type="entry name" value="HISTIDINOL-PHOSPHATE AMINOTRANSFERASE"/>
    <property type="match status" value="1"/>
</dbReference>
<dbReference type="PANTHER" id="PTHR42885">
    <property type="entry name" value="HISTIDINOL-PHOSPHATE AMINOTRANSFERASE-RELATED"/>
    <property type="match status" value="1"/>
</dbReference>
<dbReference type="Pfam" id="PF00155">
    <property type="entry name" value="Aminotran_1_2"/>
    <property type="match status" value="1"/>
</dbReference>
<dbReference type="SUPFAM" id="SSF53383">
    <property type="entry name" value="PLP-dependent transferases"/>
    <property type="match status" value="1"/>
</dbReference>
<dbReference type="PROSITE" id="PS00599">
    <property type="entry name" value="AA_TRANSFER_CLASS_2"/>
    <property type="match status" value="1"/>
</dbReference>
<keyword id="KW-0032">Aminotransferase</keyword>
<keyword id="KW-0972">Capsule biogenesis/degradation</keyword>
<keyword id="KW-0663">Pyridoxal phosphate</keyword>
<keyword id="KW-1185">Reference proteome</keyword>
<keyword id="KW-0808">Transferase</keyword>
<name>C1437_CAMJE</name>